<comment type="function">
    <text evidence="1">One of the primary rRNA binding proteins, it binds directly to 16S rRNA where it helps nucleate assembly of the platform of the 30S subunit by binding and bridging several RNA helices of the 16S rRNA.</text>
</comment>
<comment type="function">
    <text evidence="1">Forms an intersubunit bridge (bridge B4) with the 23S rRNA of the 50S subunit in the ribosome.</text>
</comment>
<comment type="subunit">
    <text evidence="1">Part of the 30S ribosomal subunit. Forms a bridge to the 50S subunit in the 70S ribosome, contacting the 23S rRNA.</text>
</comment>
<comment type="similarity">
    <text evidence="1">Belongs to the universal ribosomal protein uS15 family.</text>
</comment>
<keyword id="KW-0687">Ribonucleoprotein</keyword>
<keyword id="KW-0689">Ribosomal protein</keyword>
<keyword id="KW-0694">RNA-binding</keyword>
<keyword id="KW-0699">rRNA-binding</keyword>
<sequence length="89" mass="10343">MAISKEKKQEIIAQYARKEGDTGSPEVQIAVLTWEINHLNDHIKSHKKDHATQRGLMKKIGHRRNLLGYLRGKDVQRYRELIASLGLRR</sequence>
<accession>Q02WW4</accession>
<evidence type="ECO:0000255" key="1">
    <source>
        <dbReference type="HAMAP-Rule" id="MF_01343"/>
    </source>
</evidence>
<evidence type="ECO:0000305" key="2"/>
<feature type="chain" id="PRO_1000054801" description="Small ribosomal subunit protein uS15">
    <location>
        <begin position="1"/>
        <end position="89"/>
    </location>
</feature>
<reference key="1">
    <citation type="journal article" date="2006" name="Proc. Natl. Acad. Sci. U.S.A.">
        <title>Comparative genomics of the lactic acid bacteria.</title>
        <authorList>
            <person name="Makarova K.S."/>
            <person name="Slesarev A."/>
            <person name="Wolf Y.I."/>
            <person name="Sorokin A."/>
            <person name="Mirkin B."/>
            <person name="Koonin E.V."/>
            <person name="Pavlov A."/>
            <person name="Pavlova N."/>
            <person name="Karamychev V."/>
            <person name="Polouchine N."/>
            <person name="Shakhova V."/>
            <person name="Grigoriev I."/>
            <person name="Lou Y."/>
            <person name="Rohksar D."/>
            <person name="Lucas S."/>
            <person name="Huang K."/>
            <person name="Goodstein D.M."/>
            <person name="Hawkins T."/>
            <person name="Plengvidhya V."/>
            <person name="Welker D."/>
            <person name="Hughes J."/>
            <person name="Goh Y."/>
            <person name="Benson A."/>
            <person name="Baldwin K."/>
            <person name="Lee J.-H."/>
            <person name="Diaz-Muniz I."/>
            <person name="Dosti B."/>
            <person name="Smeianov V."/>
            <person name="Wechter W."/>
            <person name="Barabote R."/>
            <person name="Lorca G."/>
            <person name="Altermann E."/>
            <person name="Barrangou R."/>
            <person name="Ganesan B."/>
            <person name="Xie Y."/>
            <person name="Rawsthorne H."/>
            <person name="Tamir D."/>
            <person name="Parker C."/>
            <person name="Breidt F."/>
            <person name="Broadbent J.R."/>
            <person name="Hutkins R."/>
            <person name="O'Sullivan D."/>
            <person name="Steele J."/>
            <person name="Unlu G."/>
            <person name="Saier M.H. Jr."/>
            <person name="Klaenhammer T."/>
            <person name="Richardson P."/>
            <person name="Kozyavkin S."/>
            <person name="Weimer B.C."/>
            <person name="Mills D.A."/>
        </authorList>
    </citation>
    <scope>NUCLEOTIDE SEQUENCE [LARGE SCALE GENOMIC DNA]</scope>
    <source>
        <strain>SK11</strain>
    </source>
</reference>
<gene>
    <name evidence="1" type="primary">rpsO</name>
    <name type="ordered locus">LACR_2081</name>
</gene>
<proteinExistence type="inferred from homology"/>
<protein>
    <recommendedName>
        <fullName evidence="1">Small ribosomal subunit protein uS15</fullName>
    </recommendedName>
    <alternativeName>
        <fullName evidence="2">30S ribosomal protein S15</fullName>
    </alternativeName>
</protein>
<name>RS15_LACLS</name>
<organism>
    <name type="scientific">Lactococcus lactis subsp. cremoris (strain SK11)</name>
    <dbReference type="NCBI Taxonomy" id="272622"/>
    <lineage>
        <taxon>Bacteria</taxon>
        <taxon>Bacillati</taxon>
        <taxon>Bacillota</taxon>
        <taxon>Bacilli</taxon>
        <taxon>Lactobacillales</taxon>
        <taxon>Streptococcaceae</taxon>
        <taxon>Lactococcus</taxon>
        <taxon>Lactococcus cremoris subsp. cremoris</taxon>
    </lineage>
</organism>
<dbReference type="EMBL" id="CP000425">
    <property type="protein sequence ID" value="ABJ73558.1"/>
    <property type="molecule type" value="Genomic_DNA"/>
</dbReference>
<dbReference type="RefSeq" id="WP_010906184.1">
    <property type="nucleotide sequence ID" value="NC_008527.1"/>
</dbReference>
<dbReference type="SMR" id="Q02WW4"/>
<dbReference type="GeneID" id="61110216"/>
<dbReference type="KEGG" id="llc:LACR_2081"/>
<dbReference type="HOGENOM" id="CLU_148518_0_0_9"/>
<dbReference type="Proteomes" id="UP000000240">
    <property type="component" value="Chromosome"/>
</dbReference>
<dbReference type="GO" id="GO:0022627">
    <property type="term" value="C:cytosolic small ribosomal subunit"/>
    <property type="evidence" value="ECO:0007669"/>
    <property type="project" value="TreeGrafter"/>
</dbReference>
<dbReference type="GO" id="GO:0019843">
    <property type="term" value="F:rRNA binding"/>
    <property type="evidence" value="ECO:0007669"/>
    <property type="project" value="UniProtKB-UniRule"/>
</dbReference>
<dbReference type="GO" id="GO:0003735">
    <property type="term" value="F:structural constituent of ribosome"/>
    <property type="evidence" value="ECO:0007669"/>
    <property type="project" value="InterPro"/>
</dbReference>
<dbReference type="GO" id="GO:0006412">
    <property type="term" value="P:translation"/>
    <property type="evidence" value="ECO:0007669"/>
    <property type="project" value="UniProtKB-UniRule"/>
</dbReference>
<dbReference type="CDD" id="cd00353">
    <property type="entry name" value="Ribosomal_S15p_S13e"/>
    <property type="match status" value="1"/>
</dbReference>
<dbReference type="FunFam" id="1.10.287.10:FF:000002">
    <property type="entry name" value="30S ribosomal protein S15"/>
    <property type="match status" value="1"/>
</dbReference>
<dbReference type="Gene3D" id="6.10.250.3130">
    <property type="match status" value="1"/>
</dbReference>
<dbReference type="Gene3D" id="1.10.287.10">
    <property type="entry name" value="S15/NS1, RNA-binding"/>
    <property type="match status" value="1"/>
</dbReference>
<dbReference type="HAMAP" id="MF_01343_B">
    <property type="entry name" value="Ribosomal_uS15_B"/>
    <property type="match status" value="1"/>
</dbReference>
<dbReference type="InterPro" id="IPR000589">
    <property type="entry name" value="Ribosomal_uS15"/>
</dbReference>
<dbReference type="InterPro" id="IPR005290">
    <property type="entry name" value="Ribosomal_uS15_bac-type"/>
</dbReference>
<dbReference type="InterPro" id="IPR009068">
    <property type="entry name" value="uS15_NS1_RNA-bd_sf"/>
</dbReference>
<dbReference type="NCBIfam" id="TIGR00952">
    <property type="entry name" value="S15_bact"/>
    <property type="match status" value="1"/>
</dbReference>
<dbReference type="PANTHER" id="PTHR23321">
    <property type="entry name" value="RIBOSOMAL PROTEIN S15, BACTERIAL AND ORGANELLAR"/>
    <property type="match status" value="1"/>
</dbReference>
<dbReference type="PANTHER" id="PTHR23321:SF26">
    <property type="entry name" value="SMALL RIBOSOMAL SUBUNIT PROTEIN US15M"/>
    <property type="match status" value="1"/>
</dbReference>
<dbReference type="Pfam" id="PF00312">
    <property type="entry name" value="Ribosomal_S15"/>
    <property type="match status" value="1"/>
</dbReference>
<dbReference type="SMART" id="SM01387">
    <property type="entry name" value="Ribosomal_S15"/>
    <property type="match status" value="1"/>
</dbReference>
<dbReference type="SUPFAM" id="SSF47060">
    <property type="entry name" value="S15/NS1 RNA-binding domain"/>
    <property type="match status" value="1"/>
</dbReference>
<dbReference type="PROSITE" id="PS00362">
    <property type="entry name" value="RIBOSOMAL_S15"/>
    <property type="match status" value="1"/>
</dbReference>